<organism>
    <name type="scientific">Oenococcus oeni (strain ATCC BAA-331 / PSU-1)</name>
    <dbReference type="NCBI Taxonomy" id="203123"/>
    <lineage>
        <taxon>Bacteria</taxon>
        <taxon>Bacillati</taxon>
        <taxon>Bacillota</taxon>
        <taxon>Bacilli</taxon>
        <taxon>Lactobacillales</taxon>
        <taxon>Lactobacillaceae</taxon>
        <taxon>Oenococcus</taxon>
    </lineage>
</organism>
<keyword id="KW-0030">Aminoacyl-tRNA synthetase</keyword>
<keyword id="KW-0067">ATP-binding</keyword>
<keyword id="KW-0963">Cytoplasm</keyword>
<keyword id="KW-0436">Ligase</keyword>
<keyword id="KW-0547">Nucleotide-binding</keyword>
<keyword id="KW-0648">Protein biosynthesis</keyword>
<keyword id="KW-1185">Reference proteome</keyword>
<dbReference type="EC" id="6.1.1.14" evidence="1"/>
<dbReference type="EMBL" id="CP000411">
    <property type="protein sequence ID" value="ABJ56901.1"/>
    <property type="molecule type" value="Genomic_DNA"/>
</dbReference>
<dbReference type="RefSeq" id="WP_002817118.1">
    <property type="nucleotide sequence ID" value="NC_008528.1"/>
</dbReference>
<dbReference type="SMR" id="Q04F71"/>
<dbReference type="STRING" id="203123.OEOE_0992"/>
<dbReference type="KEGG" id="ooe:OEOE_0992"/>
<dbReference type="eggNOG" id="COG0752">
    <property type="taxonomic scope" value="Bacteria"/>
</dbReference>
<dbReference type="HOGENOM" id="CLU_057066_1_0_9"/>
<dbReference type="Proteomes" id="UP000000774">
    <property type="component" value="Chromosome"/>
</dbReference>
<dbReference type="GO" id="GO:0005829">
    <property type="term" value="C:cytosol"/>
    <property type="evidence" value="ECO:0007669"/>
    <property type="project" value="TreeGrafter"/>
</dbReference>
<dbReference type="GO" id="GO:0005524">
    <property type="term" value="F:ATP binding"/>
    <property type="evidence" value="ECO:0007669"/>
    <property type="project" value="UniProtKB-UniRule"/>
</dbReference>
<dbReference type="GO" id="GO:0140096">
    <property type="term" value="F:catalytic activity, acting on a protein"/>
    <property type="evidence" value="ECO:0007669"/>
    <property type="project" value="UniProtKB-ARBA"/>
</dbReference>
<dbReference type="GO" id="GO:0004820">
    <property type="term" value="F:glycine-tRNA ligase activity"/>
    <property type="evidence" value="ECO:0007669"/>
    <property type="project" value="UniProtKB-UniRule"/>
</dbReference>
<dbReference type="GO" id="GO:0016740">
    <property type="term" value="F:transferase activity"/>
    <property type="evidence" value="ECO:0007669"/>
    <property type="project" value="UniProtKB-ARBA"/>
</dbReference>
<dbReference type="GO" id="GO:0006426">
    <property type="term" value="P:glycyl-tRNA aminoacylation"/>
    <property type="evidence" value="ECO:0007669"/>
    <property type="project" value="UniProtKB-UniRule"/>
</dbReference>
<dbReference type="FunFam" id="3.30.930.10:FF:000006">
    <property type="entry name" value="Glycine--tRNA ligase alpha subunit"/>
    <property type="match status" value="1"/>
</dbReference>
<dbReference type="Gene3D" id="3.30.930.10">
    <property type="entry name" value="Bira Bifunctional Protein, Domain 2"/>
    <property type="match status" value="1"/>
</dbReference>
<dbReference type="Gene3D" id="1.20.58.180">
    <property type="entry name" value="Class II aaRS and biotin synthetases, domain 2"/>
    <property type="match status" value="1"/>
</dbReference>
<dbReference type="HAMAP" id="MF_00254">
    <property type="entry name" value="Gly_tRNA_synth_alpha"/>
    <property type="match status" value="1"/>
</dbReference>
<dbReference type="InterPro" id="IPR045864">
    <property type="entry name" value="aa-tRNA-synth_II/BPL/LPL"/>
</dbReference>
<dbReference type="InterPro" id="IPR006194">
    <property type="entry name" value="Gly-tRNA-synth_heterodimer"/>
</dbReference>
<dbReference type="InterPro" id="IPR002310">
    <property type="entry name" value="Gly-tRNA_ligase_asu"/>
</dbReference>
<dbReference type="NCBIfam" id="TIGR00388">
    <property type="entry name" value="glyQ"/>
    <property type="match status" value="1"/>
</dbReference>
<dbReference type="NCBIfam" id="NF006827">
    <property type="entry name" value="PRK09348.1"/>
    <property type="match status" value="1"/>
</dbReference>
<dbReference type="PANTHER" id="PTHR30075:SF2">
    <property type="entry name" value="GLYCINE--TRNA LIGASE, CHLOROPLASTIC_MITOCHONDRIAL 2"/>
    <property type="match status" value="1"/>
</dbReference>
<dbReference type="PANTHER" id="PTHR30075">
    <property type="entry name" value="GLYCYL-TRNA SYNTHETASE"/>
    <property type="match status" value="1"/>
</dbReference>
<dbReference type="Pfam" id="PF02091">
    <property type="entry name" value="tRNA-synt_2e"/>
    <property type="match status" value="1"/>
</dbReference>
<dbReference type="PRINTS" id="PR01044">
    <property type="entry name" value="TRNASYNTHGA"/>
</dbReference>
<dbReference type="SUPFAM" id="SSF55681">
    <property type="entry name" value="Class II aaRS and biotin synthetases"/>
    <property type="match status" value="1"/>
</dbReference>
<dbReference type="PROSITE" id="PS50861">
    <property type="entry name" value="AA_TRNA_LIGASE_II_GLYAB"/>
    <property type="match status" value="1"/>
</dbReference>
<evidence type="ECO:0000255" key="1">
    <source>
        <dbReference type="HAMAP-Rule" id="MF_00254"/>
    </source>
</evidence>
<feature type="chain" id="PRO_1000101211" description="Glycine--tRNA ligase alpha subunit">
    <location>
        <begin position="1"/>
        <end position="319"/>
    </location>
</feature>
<sequence>MTKKMSMQDIILNLQEYWAEQGANLMQAYDNEVGAGTQSPYTFLRANGPEPWNAAYVQPSRRPADGRYGHNPNRLFQHHQFQVVMKPSPENIQELYLGSLTRLGLKASEHDIRFVEDNWENPSMGAAGIGWEVWLDGMEVTQFTYFQQVGSIEVDSVTAEITYGLERLASYIQDVLSVYDLEWGNGVMYGDIFKEPEYEHSVYSFDQSDEKMLLENFDQYEAEAKRLTKLGLVHPAYDYILKLSHIFNLLDARGAVSVTERAGYMHRIRSMARAIAREFITARAKLGFPLLKDSKLREKYIGEKGIYTKKLAKKIKKEA</sequence>
<reference key="1">
    <citation type="journal article" date="2006" name="Proc. Natl. Acad. Sci. U.S.A.">
        <title>Comparative genomics of the lactic acid bacteria.</title>
        <authorList>
            <person name="Makarova K.S."/>
            <person name="Slesarev A."/>
            <person name="Wolf Y.I."/>
            <person name="Sorokin A."/>
            <person name="Mirkin B."/>
            <person name="Koonin E.V."/>
            <person name="Pavlov A."/>
            <person name="Pavlova N."/>
            <person name="Karamychev V."/>
            <person name="Polouchine N."/>
            <person name="Shakhova V."/>
            <person name="Grigoriev I."/>
            <person name="Lou Y."/>
            <person name="Rohksar D."/>
            <person name="Lucas S."/>
            <person name="Huang K."/>
            <person name="Goodstein D.M."/>
            <person name="Hawkins T."/>
            <person name="Plengvidhya V."/>
            <person name="Welker D."/>
            <person name="Hughes J."/>
            <person name="Goh Y."/>
            <person name="Benson A."/>
            <person name="Baldwin K."/>
            <person name="Lee J.-H."/>
            <person name="Diaz-Muniz I."/>
            <person name="Dosti B."/>
            <person name="Smeianov V."/>
            <person name="Wechter W."/>
            <person name="Barabote R."/>
            <person name="Lorca G."/>
            <person name="Altermann E."/>
            <person name="Barrangou R."/>
            <person name="Ganesan B."/>
            <person name="Xie Y."/>
            <person name="Rawsthorne H."/>
            <person name="Tamir D."/>
            <person name="Parker C."/>
            <person name="Breidt F."/>
            <person name="Broadbent J.R."/>
            <person name="Hutkins R."/>
            <person name="O'Sullivan D."/>
            <person name="Steele J."/>
            <person name="Unlu G."/>
            <person name="Saier M.H. Jr."/>
            <person name="Klaenhammer T."/>
            <person name="Richardson P."/>
            <person name="Kozyavkin S."/>
            <person name="Weimer B.C."/>
            <person name="Mills D.A."/>
        </authorList>
    </citation>
    <scope>NUCLEOTIDE SEQUENCE [LARGE SCALE GENOMIC DNA]</scope>
    <source>
        <strain>ATCC BAA-331 / PSU-1</strain>
    </source>
</reference>
<accession>Q04F71</accession>
<name>SYGA_OENOB</name>
<proteinExistence type="inferred from homology"/>
<comment type="catalytic activity">
    <reaction evidence="1">
        <text>tRNA(Gly) + glycine + ATP = glycyl-tRNA(Gly) + AMP + diphosphate</text>
        <dbReference type="Rhea" id="RHEA:16013"/>
        <dbReference type="Rhea" id="RHEA-COMP:9664"/>
        <dbReference type="Rhea" id="RHEA-COMP:9683"/>
        <dbReference type="ChEBI" id="CHEBI:30616"/>
        <dbReference type="ChEBI" id="CHEBI:33019"/>
        <dbReference type="ChEBI" id="CHEBI:57305"/>
        <dbReference type="ChEBI" id="CHEBI:78442"/>
        <dbReference type="ChEBI" id="CHEBI:78522"/>
        <dbReference type="ChEBI" id="CHEBI:456215"/>
        <dbReference type="EC" id="6.1.1.14"/>
    </reaction>
</comment>
<comment type="subunit">
    <text evidence="1">Tetramer of two alpha and two beta subunits.</text>
</comment>
<comment type="subcellular location">
    <subcellularLocation>
        <location evidence="1">Cytoplasm</location>
    </subcellularLocation>
</comment>
<comment type="similarity">
    <text evidence="1">Belongs to the class-II aminoacyl-tRNA synthetase family.</text>
</comment>
<protein>
    <recommendedName>
        <fullName evidence="1">Glycine--tRNA ligase alpha subunit</fullName>
        <ecNumber evidence="1">6.1.1.14</ecNumber>
    </recommendedName>
    <alternativeName>
        <fullName evidence="1">Glycyl-tRNA synthetase alpha subunit</fullName>
        <shortName evidence="1">GlyRS</shortName>
    </alternativeName>
</protein>
<gene>
    <name evidence="1" type="primary">glyQ</name>
    <name type="ordered locus">OEOE_0992</name>
</gene>